<gene>
    <name evidence="1" type="primary">rplB</name>
    <name type="ordered locus">Xfasm12_0497</name>
</gene>
<proteinExistence type="inferred from homology"/>
<sequence>MPLIKFKPTSPGRRSAARVVTPNIHKGSPHASLLESQSKTGGRNHHGRITVRHIGGGCKQRYRVIDFKRDKEAIPARVERIEYDPNRTAHIALLCYIDGERCYIIAPKGLKEGDKIISGPNVPIKLGNSLPLRNIPVGTTVHAVELKPRKGAQMARSAGSSVQLVAREGVYATLRLRSGEMRRVLAECRATIGEVGNEEHNLRKLGKAGAKRWLGVRPTVRGAAMNPVDHPHGGGEAKSGQGNPHPVTPWGVPTKGYKTRKNKRTQQFIIRGRRG</sequence>
<name>RL2_XYLFM</name>
<dbReference type="EMBL" id="CP000941">
    <property type="protein sequence ID" value="ACA11506.1"/>
    <property type="molecule type" value="Genomic_DNA"/>
</dbReference>
<dbReference type="RefSeq" id="WP_004086523.1">
    <property type="nucleotide sequence ID" value="NC_010513.1"/>
</dbReference>
<dbReference type="SMR" id="B0U5B0"/>
<dbReference type="GeneID" id="93904142"/>
<dbReference type="KEGG" id="xfm:Xfasm12_0497"/>
<dbReference type="HOGENOM" id="CLU_036235_2_1_6"/>
<dbReference type="GO" id="GO:0015934">
    <property type="term" value="C:large ribosomal subunit"/>
    <property type="evidence" value="ECO:0007669"/>
    <property type="project" value="InterPro"/>
</dbReference>
<dbReference type="GO" id="GO:0019843">
    <property type="term" value="F:rRNA binding"/>
    <property type="evidence" value="ECO:0007669"/>
    <property type="project" value="UniProtKB-UniRule"/>
</dbReference>
<dbReference type="GO" id="GO:0003735">
    <property type="term" value="F:structural constituent of ribosome"/>
    <property type="evidence" value="ECO:0007669"/>
    <property type="project" value="InterPro"/>
</dbReference>
<dbReference type="GO" id="GO:0016740">
    <property type="term" value="F:transferase activity"/>
    <property type="evidence" value="ECO:0007669"/>
    <property type="project" value="InterPro"/>
</dbReference>
<dbReference type="GO" id="GO:0002181">
    <property type="term" value="P:cytoplasmic translation"/>
    <property type="evidence" value="ECO:0007669"/>
    <property type="project" value="TreeGrafter"/>
</dbReference>
<dbReference type="FunFam" id="2.30.30.30:FF:000001">
    <property type="entry name" value="50S ribosomal protein L2"/>
    <property type="match status" value="1"/>
</dbReference>
<dbReference type="FunFam" id="2.40.50.140:FF:000003">
    <property type="entry name" value="50S ribosomal protein L2"/>
    <property type="match status" value="1"/>
</dbReference>
<dbReference type="FunFam" id="4.10.950.10:FF:000001">
    <property type="entry name" value="50S ribosomal protein L2"/>
    <property type="match status" value="1"/>
</dbReference>
<dbReference type="Gene3D" id="2.30.30.30">
    <property type="match status" value="1"/>
</dbReference>
<dbReference type="Gene3D" id="2.40.50.140">
    <property type="entry name" value="Nucleic acid-binding proteins"/>
    <property type="match status" value="1"/>
</dbReference>
<dbReference type="Gene3D" id="4.10.950.10">
    <property type="entry name" value="Ribosomal protein L2, domain 3"/>
    <property type="match status" value="1"/>
</dbReference>
<dbReference type="HAMAP" id="MF_01320_B">
    <property type="entry name" value="Ribosomal_uL2_B"/>
    <property type="match status" value="1"/>
</dbReference>
<dbReference type="InterPro" id="IPR012340">
    <property type="entry name" value="NA-bd_OB-fold"/>
</dbReference>
<dbReference type="InterPro" id="IPR014722">
    <property type="entry name" value="Rib_uL2_dom2"/>
</dbReference>
<dbReference type="InterPro" id="IPR002171">
    <property type="entry name" value="Ribosomal_uL2"/>
</dbReference>
<dbReference type="InterPro" id="IPR005880">
    <property type="entry name" value="Ribosomal_uL2_bac/org-type"/>
</dbReference>
<dbReference type="InterPro" id="IPR022669">
    <property type="entry name" value="Ribosomal_uL2_C"/>
</dbReference>
<dbReference type="InterPro" id="IPR022671">
    <property type="entry name" value="Ribosomal_uL2_CS"/>
</dbReference>
<dbReference type="InterPro" id="IPR014726">
    <property type="entry name" value="Ribosomal_uL2_dom3"/>
</dbReference>
<dbReference type="InterPro" id="IPR022666">
    <property type="entry name" value="Ribosomal_uL2_RNA-bd_dom"/>
</dbReference>
<dbReference type="InterPro" id="IPR008991">
    <property type="entry name" value="Translation_prot_SH3-like_sf"/>
</dbReference>
<dbReference type="NCBIfam" id="TIGR01171">
    <property type="entry name" value="rplB_bact"/>
    <property type="match status" value="1"/>
</dbReference>
<dbReference type="PANTHER" id="PTHR13691:SF5">
    <property type="entry name" value="LARGE RIBOSOMAL SUBUNIT PROTEIN UL2M"/>
    <property type="match status" value="1"/>
</dbReference>
<dbReference type="PANTHER" id="PTHR13691">
    <property type="entry name" value="RIBOSOMAL PROTEIN L2"/>
    <property type="match status" value="1"/>
</dbReference>
<dbReference type="Pfam" id="PF00181">
    <property type="entry name" value="Ribosomal_L2"/>
    <property type="match status" value="1"/>
</dbReference>
<dbReference type="Pfam" id="PF03947">
    <property type="entry name" value="Ribosomal_L2_C"/>
    <property type="match status" value="1"/>
</dbReference>
<dbReference type="PIRSF" id="PIRSF002158">
    <property type="entry name" value="Ribosomal_L2"/>
    <property type="match status" value="1"/>
</dbReference>
<dbReference type="SMART" id="SM01383">
    <property type="entry name" value="Ribosomal_L2"/>
    <property type="match status" value="1"/>
</dbReference>
<dbReference type="SMART" id="SM01382">
    <property type="entry name" value="Ribosomal_L2_C"/>
    <property type="match status" value="1"/>
</dbReference>
<dbReference type="SUPFAM" id="SSF50249">
    <property type="entry name" value="Nucleic acid-binding proteins"/>
    <property type="match status" value="1"/>
</dbReference>
<dbReference type="SUPFAM" id="SSF50104">
    <property type="entry name" value="Translation proteins SH3-like domain"/>
    <property type="match status" value="1"/>
</dbReference>
<dbReference type="PROSITE" id="PS00467">
    <property type="entry name" value="RIBOSOMAL_L2"/>
    <property type="match status" value="1"/>
</dbReference>
<protein>
    <recommendedName>
        <fullName evidence="1">Large ribosomal subunit protein uL2</fullName>
    </recommendedName>
    <alternativeName>
        <fullName evidence="3">50S ribosomal protein L2</fullName>
    </alternativeName>
</protein>
<feature type="chain" id="PRO_1000141643" description="Large ribosomal subunit protein uL2">
    <location>
        <begin position="1"/>
        <end position="275"/>
    </location>
</feature>
<feature type="region of interest" description="Disordered" evidence="2">
    <location>
        <begin position="24"/>
        <end position="47"/>
    </location>
</feature>
<feature type="region of interest" description="Disordered" evidence="2">
    <location>
        <begin position="227"/>
        <end position="261"/>
    </location>
</feature>
<accession>B0U5B0</accession>
<organism>
    <name type="scientific">Xylella fastidiosa (strain M12)</name>
    <dbReference type="NCBI Taxonomy" id="405440"/>
    <lineage>
        <taxon>Bacteria</taxon>
        <taxon>Pseudomonadati</taxon>
        <taxon>Pseudomonadota</taxon>
        <taxon>Gammaproteobacteria</taxon>
        <taxon>Lysobacterales</taxon>
        <taxon>Lysobacteraceae</taxon>
        <taxon>Xylella</taxon>
    </lineage>
</organism>
<evidence type="ECO:0000255" key="1">
    <source>
        <dbReference type="HAMAP-Rule" id="MF_01320"/>
    </source>
</evidence>
<evidence type="ECO:0000256" key="2">
    <source>
        <dbReference type="SAM" id="MobiDB-lite"/>
    </source>
</evidence>
<evidence type="ECO:0000305" key="3"/>
<keyword id="KW-0687">Ribonucleoprotein</keyword>
<keyword id="KW-0689">Ribosomal protein</keyword>
<keyword id="KW-0694">RNA-binding</keyword>
<keyword id="KW-0699">rRNA-binding</keyword>
<reference key="1">
    <citation type="journal article" date="2010" name="J. Bacteriol.">
        <title>Whole genome sequences of two Xylella fastidiosa strains (M12 and M23) causing almond leaf scorch disease in California.</title>
        <authorList>
            <person name="Chen J."/>
            <person name="Xie G."/>
            <person name="Han S."/>
            <person name="Chertkov O."/>
            <person name="Sims D."/>
            <person name="Civerolo E.L."/>
        </authorList>
    </citation>
    <scope>NUCLEOTIDE SEQUENCE [LARGE SCALE GENOMIC DNA]</scope>
    <source>
        <strain>M12</strain>
    </source>
</reference>
<comment type="function">
    <text evidence="1">One of the primary rRNA binding proteins. Required for association of the 30S and 50S subunits to form the 70S ribosome, for tRNA binding and peptide bond formation. It has been suggested to have peptidyltransferase activity; this is somewhat controversial. Makes several contacts with the 16S rRNA in the 70S ribosome.</text>
</comment>
<comment type="subunit">
    <text evidence="1">Part of the 50S ribosomal subunit. Forms a bridge to the 30S subunit in the 70S ribosome.</text>
</comment>
<comment type="similarity">
    <text evidence="1">Belongs to the universal ribosomal protein uL2 family.</text>
</comment>